<sequence>MSDLKTEAQDLQQEENALIALRKEKLAAERVKGNAFPNDFRRDSYCNDLQKQYADKTKEELEAAAIPVKVAGRIMLNRGSFMVIQDMTGRIQVYVNRKTLSEDTLAAVKTWDLGDIISAEGTLARSGKGDLYVEMTNVRLLTKSLRPLPDKHHGLTDTEQRYRQRYVDLMVNEETRHTFRVRSQVISHIRKFLIERDFLEVETPMLQTIPGGAAAKPFETHHNALDMAMFLRIAPELYLKRLVVGGFEKVFEINRNFRNEGVSTRHNPEFTMLEFYQAYADYRDNMDLTEELFRELAQLVLGSTDVPYGDKVFHFGEPFVRLSVFDSILKYNPELTAADLQDVDRAREIAKKAGAKVLGHEGLGKLQVMIFEELVEHKLEQPHFITEYPFEVSPLARRNDDNPAVTDRFELFIGGREIANAYSELNDAEDQAERFLAQVAEKDAGDDEAMHYDADFVRALEYGMPPTAGEGIGIDRLVMLLTNSPSIRDVILFPHMRPQA</sequence>
<dbReference type="EC" id="6.1.1.6" evidence="1"/>
<dbReference type="EMBL" id="CT573326">
    <property type="protein sequence ID" value="CAK14148.1"/>
    <property type="molecule type" value="Genomic_DNA"/>
</dbReference>
<dbReference type="RefSeq" id="WP_011532564.1">
    <property type="nucleotide sequence ID" value="NC_008027.1"/>
</dbReference>
<dbReference type="SMR" id="Q1IDW1"/>
<dbReference type="STRING" id="384676.PSEEN1255"/>
<dbReference type="GeneID" id="32804532"/>
<dbReference type="KEGG" id="pen:PSEEN1255"/>
<dbReference type="eggNOG" id="COG1190">
    <property type="taxonomic scope" value="Bacteria"/>
</dbReference>
<dbReference type="HOGENOM" id="CLU_008255_6_0_6"/>
<dbReference type="OrthoDB" id="9801152at2"/>
<dbReference type="Proteomes" id="UP000000658">
    <property type="component" value="Chromosome"/>
</dbReference>
<dbReference type="GO" id="GO:0005829">
    <property type="term" value="C:cytosol"/>
    <property type="evidence" value="ECO:0007669"/>
    <property type="project" value="TreeGrafter"/>
</dbReference>
<dbReference type="GO" id="GO:0005524">
    <property type="term" value="F:ATP binding"/>
    <property type="evidence" value="ECO:0007669"/>
    <property type="project" value="UniProtKB-UniRule"/>
</dbReference>
<dbReference type="GO" id="GO:0004824">
    <property type="term" value="F:lysine-tRNA ligase activity"/>
    <property type="evidence" value="ECO:0007669"/>
    <property type="project" value="UniProtKB-UniRule"/>
</dbReference>
<dbReference type="GO" id="GO:0000287">
    <property type="term" value="F:magnesium ion binding"/>
    <property type="evidence" value="ECO:0007669"/>
    <property type="project" value="UniProtKB-UniRule"/>
</dbReference>
<dbReference type="GO" id="GO:0000049">
    <property type="term" value="F:tRNA binding"/>
    <property type="evidence" value="ECO:0007669"/>
    <property type="project" value="TreeGrafter"/>
</dbReference>
<dbReference type="GO" id="GO:0006430">
    <property type="term" value="P:lysyl-tRNA aminoacylation"/>
    <property type="evidence" value="ECO:0007669"/>
    <property type="project" value="UniProtKB-UniRule"/>
</dbReference>
<dbReference type="CDD" id="cd00775">
    <property type="entry name" value="LysRS_core"/>
    <property type="match status" value="1"/>
</dbReference>
<dbReference type="CDD" id="cd04322">
    <property type="entry name" value="LysRS_N"/>
    <property type="match status" value="1"/>
</dbReference>
<dbReference type="FunFam" id="2.40.50.140:FF:000024">
    <property type="entry name" value="Lysine--tRNA ligase"/>
    <property type="match status" value="1"/>
</dbReference>
<dbReference type="FunFam" id="3.30.930.10:FF:000001">
    <property type="entry name" value="Lysine--tRNA ligase"/>
    <property type="match status" value="1"/>
</dbReference>
<dbReference type="Gene3D" id="3.30.930.10">
    <property type="entry name" value="Bira Bifunctional Protein, Domain 2"/>
    <property type="match status" value="1"/>
</dbReference>
<dbReference type="Gene3D" id="2.40.50.140">
    <property type="entry name" value="Nucleic acid-binding proteins"/>
    <property type="match status" value="1"/>
</dbReference>
<dbReference type="HAMAP" id="MF_00252">
    <property type="entry name" value="Lys_tRNA_synth_class2"/>
    <property type="match status" value="1"/>
</dbReference>
<dbReference type="InterPro" id="IPR004364">
    <property type="entry name" value="Aa-tRNA-synt_II"/>
</dbReference>
<dbReference type="InterPro" id="IPR006195">
    <property type="entry name" value="aa-tRNA-synth_II"/>
</dbReference>
<dbReference type="InterPro" id="IPR045864">
    <property type="entry name" value="aa-tRNA-synth_II/BPL/LPL"/>
</dbReference>
<dbReference type="InterPro" id="IPR002313">
    <property type="entry name" value="Lys-tRNA-ligase_II"/>
</dbReference>
<dbReference type="InterPro" id="IPR044136">
    <property type="entry name" value="Lys-tRNA-ligase_II_N"/>
</dbReference>
<dbReference type="InterPro" id="IPR018149">
    <property type="entry name" value="Lys-tRNA-synth_II_C"/>
</dbReference>
<dbReference type="InterPro" id="IPR012340">
    <property type="entry name" value="NA-bd_OB-fold"/>
</dbReference>
<dbReference type="InterPro" id="IPR004365">
    <property type="entry name" value="NA-bd_OB_tRNA"/>
</dbReference>
<dbReference type="NCBIfam" id="TIGR00499">
    <property type="entry name" value="lysS_bact"/>
    <property type="match status" value="1"/>
</dbReference>
<dbReference type="NCBIfam" id="NF001756">
    <property type="entry name" value="PRK00484.1"/>
    <property type="match status" value="1"/>
</dbReference>
<dbReference type="PANTHER" id="PTHR42918:SF15">
    <property type="entry name" value="LYSINE--TRNA LIGASE, CHLOROPLASTIC_MITOCHONDRIAL"/>
    <property type="match status" value="1"/>
</dbReference>
<dbReference type="PANTHER" id="PTHR42918">
    <property type="entry name" value="LYSYL-TRNA SYNTHETASE"/>
    <property type="match status" value="1"/>
</dbReference>
<dbReference type="Pfam" id="PF00152">
    <property type="entry name" value="tRNA-synt_2"/>
    <property type="match status" value="1"/>
</dbReference>
<dbReference type="Pfam" id="PF01336">
    <property type="entry name" value="tRNA_anti-codon"/>
    <property type="match status" value="1"/>
</dbReference>
<dbReference type="PRINTS" id="PR00982">
    <property type="entry name" value="TRNASYNTHLYS"/>
</dbReference>
<dbReference type="SUPFAM" id="SSF55681">
    <property type="entry name" value="Class II aaRS and biotin synthetases"/>
    <property type="match status" value="1"/>
</dbReference>
<dbReference type="SUPFAM" id="SSF50249">
    <property type="entry name" value="Nucleic acid-binding proteins"/>
    <property type="match status" value="1"/>
</dbReference>
<dbReference type="PROSITE" id="PS50862">
    <property type="entry name" value="AA_TRNA_LIGASE_II"/>
    <property type="match status" value="1"/>
</dbReference>
<protein>
    <recommendedName>
        <fullName evidence="1">Lysine--tRNA ligase</fullName>
        <ecNumber evidence="1">6.1.1.6</ecNumber>
    </recommendedName>
    <alternativeName>
        <fullName evidence="1">Lysyl-tRNA synthetase</fullName>
        <shortName evidence="1">LysRS</shortName>
    </alternativeName>
</protein>
<gene>
    <name evidence="1" type="primary">lysS</name>
    <name type="ordered locus">PSEEN1255</name>
</gene>
<keyword id="KW-0030">Aminoacyl-tRNA synthetase</keyword>
<keyword id="KW-0067">ATP-binding</keyword>
<keyword id="KW-0963">Cytoplasm</keyword>
<keyword id="KW-0436">Ligase</keyword>
<keyword id="KW-0460">Magnesium</keyword>
<keyword id="KW-0479">Metal-binding</keyword>
<keyword id="KW-0547">Nucleotide-binding</keyword>
<keyword id="KW-0648">Protein biosynthesis</keyword>
<name>SYK_PSEE4</name>
<evidence type="ECO:0000255" key="1">
    <source>
        <dbReference type="HAMAP-Rule" id="MF_00252"/>
    </source>
</evidence>
<organism>
    <name type="scientific">Pseudomonas entomophila (strain L48)</name>
    <dbReference type="NCBI Taxonomy" id="384676"/>
    <lineage>
        <taxon>Bacteria</taxon>
        <taxon>Pseudomonadati</taxon>
        <taxon>Pseudomonadota</taxon>
        <taxon>Gammaproteobacteria</taxon>
        <taxon>Pseudomonadales</taxon>
        <taxon>Pseudomonadaceae</taxon>
        <taxon>Pseudomonas</taxon>
    </lineage>
</organism>
<proteinExistence type="inferred from homology"/>
<feature type="chain" id="PRO_1000012909" description="Lysine--tRNA ligase">
    <location>
        <begin position="1"/>
        <end position="500"/>
    </location>
</feature>
<feature type="binding site" evidence="1">
    <location>
        <position position="410"/>
    </location>
    <ligand>
        <name>Mg(2+)</name>
        <dbReference type="ChEBI" id="CHEBI:18420"/>
        <label>1</label>
    </ligand>
</feature>
<feature type="binding site" evidence="1">
    <location>
        <position position="417"/>
    </location>
    <ligand>
        <name>Mg(2+)</name>
        <dbReference type="ChEBI" id="CHEBI:18420"/>
        <label>1</label>
    </ligand>
</feature>
<feature type="binding site" evidence="1">
    <location>
        <position position="417"/>
    </location>
    <ligand>
        <name>Mg(2+)</name>
        <dbReference type="ChEBI" id="CHEBI:18420"/>
        <label>2</label>
    </ligand>
</feature>
<accession>Q1IDW1</accession>
<comment type="catalytic activity">
    <reaction evidence="1">
        <text>tRNA(Lys) + L-lysine + ATP = L-lysyl-tRNA(Lys) + AMP + diphosphate</text>
        <dbReference type="Rhea" id="RHEA:20792"/>
        <dbReference type="Rhea" id="RHEA-COMP:9696"/>
        <dbReference type="Rhea" id="RHEA-COMP:9697"/>
        <dbReference type="ChEBI" id="CHEBI:30616"/>
        <dbReference type="ChEBI" id="CHEBI:32551"/>
        <dbReference type="ChEBI" id="CHEBI:33019"/>
        <dbReference type="ChEBI" id="CHEBI:78442"/>
        <dbReference type="ChEBI" id="CHEBI:78529"/>
        <dbReference type="ChEBI" id="CHEBI:456215"/>
        <dbReference type="EC" id="6.1.1.6"/>
    </reaction>
</comment>
<comment type="cofactor">
    <cofactor evidence="1">
        <name>Mg(2+)</name>
        <dbReference type="ChEBI" id="CHEBI:18420"/>
    </cofactor>
    <text evidence="1">Binds 3 Mg(2+) ions per subunit.</text>
</comment>
<comment type="subunit">
    <text evidence="1">Homodimer.</text>
</comment>
<comment type="subcellular location">
    <subcellularLocation>
        <location evidence="1">Cytoplasm</location>
    </subcellularLocation>
</comment>
<comment type="similarity">
    <text evidence="1">Belongs to the class-II aminoacyl-tRNA synthetase family.</text>
</comment>
<reference key="1">
    <citation type="journal article" date="2006" name="Nat. Biotechnol.">
        <title>Complete genome sequence of the entomopathogenic and metabolically versatile soil bacterium Pseudomonas entomophila.</title>
        <authorList>
            <person name="Vodovar N."/>
            <person name="Vallenet D."/>
            <person name="Cruveiller S."/>
            <person name="Rouy Z."/>
            <person name="Barbe V."/>
            <person name="Acosta C."/>
            <person name="Cattolico L."/>
            <person name="Jubin C."/>
            <person name="Lajus A."/>
            <person name="Segurens B."/>
            <person name="Vacherie B."/>
            <person name="Wincker P."/>
            <person name="Weissenbach J."/>
            <person name="Lemaitre B."/>
            <person name="Medigue C."/>
            <person name="Boccard F."/>
        </authorList>
    </citation>
    <scope>NUCLEOTIDE SEQUENCE [LARGE SCALE GENOMIC DNA]</scope>
    <source>
        <strain>L48</strain>
    </source>
</reference>